<protein>
    <recommendedName>
        <fullName>Malonyl CoA-acyl carrier protein transacylase</fullName>
        <shortName>MCT</shortName>
        <ecNumber>2.3.1.39</ecNumber>
    </recommendedName>
</protein>
<gene>
    <name type="primary">fabD</name>
    <name type="synonym">tfpA</name>
    <name type="ordered locus">b1092</name>
    <name type="ordered locus">JW1078</name>
</gene>
<feature type="initiator methionine" description="Removed" evidence="2 4 5">
    <location>
        <position position="1"/>
    </location>
</feature>
<feature type="chain" id="PRO_0000194213" description="Malonyl CoA-acyl carrier protein transacylase">
    <location>
        <begin position="2"/>
        <end position="309"/>
    </location>
</feature>
<feature type="active site" evidence="3">
    <location>
        <position position="92"/>
    </location>
</feature>
<feature type="active site" evidence="3">
    <location>
        <position position="201"/>
    </location>
</feature>
<feature type="strand" evidence="7">
    <location>
        <begin position="4"/>
        <end position="8"/>
    </location>
</feature>
<feature type="turn" evidence="7">
    <location>
        <begin position="16"/>
        <end position="19"/>
    </location>
</feature>
<feature type="helix" evidence="7">
    <location>
        <begin position="20"/>
        <end position="25"/>
    </location>
</feature>
<feature type="helix" evidence="7">
    <location>
        <begin position="28"/>
        <end position="40"/>
    </location>
</feature>
<feature type="helix" evidence="7">
    <location>
        <begin position="44"/>
        <end position="50"/>
    </location>
</feature>
<feature type="helix" evidence="7">
    <location>
        <begin position="53"/>
        <end position="56"/>
    </location>
</feature>
<feature type="helix" evidence="7">
    <location>
        <begin position="59"/>
        <end position="79"/>
    </location>
</feature>
<feature type="strand" evidence="7">
    <location>
        <begin position="86"/>
        <end position="91"/>
    </location>
</feature>
<feature type="helix" evidence="7">
    <location>
        <begin position="93"/>
        <end position="101"/>
    </location>
</feature>
<feature type="helix" evidence="7">
    <location>
        <begin position="107"/>
        <end position="124"/>
    </location>
</feature>
<feature type="strand" evidence="7">
    <location>
        <begin position="129"/>
        <end position="137"/>
    </location>
</feature>
<feature type="helix" evidence="7">
    <location>
        <begin position="140"/>
        <end position="150"/>
    </location>
</feature>
<feature type="strand" evidence="7">
    <location>
        <begin position="156"/>
        <end position="163"/>
    </location>
</feature>
<feature type="strand" evidence="7">
    <location>
        <begin position="166"/>
        <end position="172"/>
    </location>
</feature>
<feature type="helix" evidence="7">
    <location>
        <begin position="173"/>
        <end position="185"/>
    </location>
</feature>
<feature type="strand" evidence="7">
    <location>
        <begin position="189"/>
        <end position="193"/>
    </location>
</feature>
<feature type="helix" evidence="7">
    <location>
        <begin position="203"/>
        <end position="205"/>
    </location>
</feature>
<feature type="helix" evidence="7">
    <location>
        <begin position="206"/>
        <end position="217"/>
    </location>
</feature>
<feature type="turn" evidence="7">
    <location>
        <begin position="231"/>
        <end position="233"/>
    </location>
</feature>
<feature type="helix" evidence="7">
    <location>
        <begin position="240"/>
        <end position="252"/>
    </location>
</feature>
<feature type="helix" evidence="7">
    <location>
        <begin position="257"/>
        <end position="266"/>
    </location>
</feature>
<feature type="strand" evidence="7">
    <location>
        <begin position="271"/>
        <end position="274"/>
    </location>
</feature>
<feature type="strand" evidence="7">
    <location>
        <begin position="276"/>
        <end position="279"/>
    </location>
</feature>
<feature type="helix" evidence="7">
    <location>
        <begin position="280"/>
        <end position="288"/>
    </location>
</feature>
<feature type="strand" evidence="7">
    <location>
        <begin position="293"/>
        <end position="296"/>
    </location>
</feature>
<feature type="helix" evidence="7">
    <location>
        <begin position="300"/>
        <end position="306"/>
    </location>
</feature>
<keyword id="KW-0002">3D-structure</keyword>
<keyword id="KW-0012">Acyltransferase</keyword>
<keyword id="KW-0903">Direct protein sequencing</keyword>
<keyword id="KW-0275">Fatty acid biosynthesis</keyword>
<keyword id="KW-0276">Fatty acid metabolism</keyword>
<keyword id="KW-0444">Lipid biosynthesis</keyword>
<keyword id="KW-0443">Lipid metabolism</keyword>
<keyword id="KW-1185">Reference proteome</keyword>
<keyword id="KW-0808">Transferase</keyword>
<sequence>MTQFAFVFPGQGSQTVGMLADMAASYPIVEETFAEASAALGYDLWALTQQGPAEELNKTWQTQPALLTASVALYRVWQQQGGKAPAMMAGHSLGEYSALVCAGVIDFADAVRLVEMRGKFMQEAVPEGTGAMAAIIGLDDASIAKACEEAAEGQVVSPVNFNSPGQVVIAGHKEAVERAGAACKAAGAKRALPLPVSVPSHCALMKPAADKLAVELAKITFNAPTVPVVNNVDVKCETNGDAIRDALVRQLYNPVQWTKSVEYMAAQGVEHLYEVGPGKVLTGLTKRIVDTLTASALNEPSAMAAALEL</sequence>
<name>FABD_ECOLI</name>
<dbReference type="EC" id="2.3.1.39"/>
<dbReference type="EMBL" id="M87040">
    <property type="protein sequence ID" value="AAA23742.1"/>
    <property type="molecule type" value="Genomic_DNA"/>
</dbReference>
<dbReference type="EMBL" id="Z11565">
    <property type="protein sequence ID" value="CAA77658.1"/>
    <property type="molecule type" value="Genomic_DNA"/>
</dbReference>
<dbReference type="EMBL" id="U00096">
    <property type="protein sequence ID" value="AAC74176.1"/>
    <property type="molecule type" value="Genomic_DNA"/>
</dbReference>
<dbReference type="EMBL" id="AP009048">
    <property type="protein sequence ID" value="BAA35900.1"/>
    <property type="molecule type" value="Genomic_DNA"/>
</dbReference>
<dbReference type="EMBL" id="M84991">
    <property type="protein sequence ID" value="AAA23738.1"/>
    <property type="molecule type" value="Genomic_DNA"/>
</dbReference>
<dbReference type="PIR" id="B41856">
    <property type="entry name" value="B41856"/>
</dbReference>
<dbReference type="RefSeq" id="NP_415610.1">
    <property type="nucleotide sequence ID" value="NC_000913.3"/>
</dbReference>
<dbReference type="RefSeq" id="WP_000191372.1">
    <property type="nucleotide sequence ID" value="NZ_STEB01000016.1"/>
</dbReference>
<dbReference type="PDB" id="1MLA">
    <property type="method" value="X-ray"/>
    <property type="resolution" value="1.50 A"/>
    <property type="chains" value="A=1-309"/>
</dbReference>
<dbReference type="PDB" id="2G1H">
    <property type="method" value="X-ray"/>
    <property type="resolution" value="1.86 A"/>
    <property type="chains" value="A=2-309"/>
</dbReference>
<dbReference type="PDB" id="2G2O">
    <property type="method" value="X-ray"/>
    <property type="resolution" value="1.76 A"/>
    <property type="chains" value="A=2-309"/>
</dbReference>
<dbReference type="PDB" id="2G2Y">
    <property type="method" value="X-ray"/>
    <property type="resolution" value="2.26 A"/>
    <property type="chains" value="A=2-309"/>
</dbReference>
<dbReference type="PDB" id="2G2Z">
    <property type="method" value="X-ray"/>
    <property type="resolution" value="2.80 A"/>
    <property type="chains" value="A=2-309"/>
</dbReference>
<dbReference type="PDB" id="6U0J">
    <property type="method" value="X-ray"/>
    <property type="resolution" value="1.90 A"/>
    <property type="chains" value="A=1-309"/>
</dbReference>
<dbReference type="PDBsum" id="1MLA"/>
<dbReference type="PDBsum" id="2G1H"/>
<dbReference type="PDBsum" id="2G2O"/>
<dbReference type="PDBsum" id="2G2Y"/>
<dbReference type="PDBsum" id="2G2Z"/>
<dbReference type="PDBsum" id="6U0J"/>
<dbReference type="SMR" id="P0AAI9"/>
<dbReference type="BioGRID" id="4263368">
    <property type="interactions" value="378"/>
</dbReference>
<dbReference type="BioGRID" id="850133">
    <property type="interactions" value="1"/>
</dbReference>
<dbReference type="DIP" id="DIP-47923N"/>
<dbReference type="FunCoup" id="P0AAI9">
    <property type="interactions" value="852"/>
</dbReference>
<dbReference type="IntAct" id="P0AAI9">
    <property type="interactions" value="4"/>
</dbReference>
<dbReference type="STRING" id="511145.b1092"/>
<dbReference type="SwissLipids" id="SLP:000001778"/>
<dbReference type="jPOST" id="P0AAI9"/>
<dbReference type="PaxDb" id="511145-b1092"/>
<dbReference type="EnsemblBacteria" id="AAC74176">
    <property type="protein sequence ID" value="AAC74176"/>
    <property type="gene ID" value="b1092"/>
</dbReference>
<dbReference type="GeneID" id="75203678"/>
<dbReference type="GeneID" id="945766"/>
<dbReference type="KEGG" id="ecj:JW1078"/>
<dbReference type="KEGG" id="eco:b1092"/>
<dbReference type="KEGG" id="ecoc:C3026_06605"/>
<dbReference type="PATRIC" id="fig|1411691.4.peg.1176"/>
<dbReference type="EchoBASE" id="EB1293"/>
<dbReference type="eggNOG" id="COG0331">
    <property type="taxonomic scope" value="Bacteria"/>
</dbReference>
<dbReference type="HOGENOM" id="CLU_030558_0_0_6"/>
<dbReference type="InParanoid" id="P0AAI9"/>
<dbReference type="OMA" id="AANYNCP"/>
<dbReference type="OrthoDB" id="9808564at2"/>
<dbReference type="PhylomeDB" id="P0AAI9"/>
<dbReference type="BioCyc" id="EcoCyc:MALONYL-COA-ACP-TRANSACYL-MONOMER"/>
<dbReference type="BioCyc" id="MetaCyc:MALONYL-COA-ACP-TRANSACYL-MONOMER"/>
<dbReference type="BRENDA" id="2.3.1.39">
    <property type="organism ID" value="2026"/>
</dbReference>
<dbReference type="UniPathway" id="UPA00094"/>
<dbReference type="EvolutionaryTrace" id="P0AAI9"/>
<dbReference type="PRO" id="PR:P0AAI9"/>
<dbReference type="Proteomes" id="UP000000625">
    <property type="component" value="Chromosome"/>
</dbReference>
<dbReference type="GO" id="GO:0005829">
    <property type="term" value="C:cytosol"/>
    <property type="evidence" value="ECO:0000314"/>
    <property type="project" value="EcoCyc"/>
</dbReference>
<dbReference type="GO" id="GO:0004314">
    <property type="term" value="F:[acyl-carrier-protein] S-malonyltransferase activity"/>
    <property type="evidence" value="ECO:0000314"/>
    <property type="project" value="EcoCyc"/>
</dbReference>
<dbReference type="GO" id="GO:0006633">
    <property type="term" value="P:fatty acid biosynthetic process"/>
    <property type="evidence" value="ECO:0000315"/>
    <property type="project" value="EcoCyc"/>
</dbReference>
<dbReference type="FunFam" id="3.30.70.250:FF:000001">
    <property type="entry name" value="Malonyl CoA-acyl carrier protein transacylase"/>
    <property type="match status" value="1"/>
</dbReference>
<dbReference type="Gene3D" id="3.30.70.250">
    <property type="entry name" value="Malonyl-CoA ACP transacylase, ACP-binding"/>
    <property type="match status" value="1"/>
</dbReference>
<dbReference type="Gene3D" id="3.40.366.10">
    <property type="entry name" value="Malonyl-Coenzyme A Acyl Carrier Protein, domain 2"/>
    <property type="match status" value="1"/>
</dbReference>
<dbReference type="InterPro" id="IPR001227">
    <property type="entry name" value="Ac_transferase_dom_sf"/>
</dbReference>
<dbReference type="InterPro" id="IPR014043">
    <property type="entry name" value="Acyl_transferase_dom"/>
</dbReference>
<dbReference type="InterPro" id="IPR016035">
    <property type="entry name" value="Acyl_Trfase/lysoPLipase"/>
</dbReference>
<dbReference type="InterPro" id="IPR050858">
    <property type="entry name" value="Mal-CoA-ACP_Trans/PKS_FabD"/>
</dbReference>
<dbReference type="InterPro" id="IPR024925">
    <property type="entry name" value="Malonyl_CoA-ACP_transAc"/>
</dbReference>
<dbReference type="InterPro" id="IPR004410">
    <property type="entry name" value="Malonyl_CoA-ACP_transAc_FabD"/>
</dbReference>
<dbReference type="InterPro" id="IPR016036">
    <property type="entry name" value="Malonyl_transacylase_ACP-bd"/>
</dbReference>
<dbReference type="NCBIfam" id="TIGR00128">
    <property type="entry name" value="fabD"/>
    <property type="match status" value="1"/>
</dbReference>
<dbReference type="PANTHER" id="PTHR42681">
    <property type="entry name" value="MALONYL-COA-ACYL CARRIER PROTEIN TRANSACYLASE, MITOCHONDRIAL"/>
    <property type="match status" value="1"/>
</dbReference>
<dbReference type="PANTHER" id="PTHR42681:SF1">
    <property type="entry name" value="MALONYL-COA-ACYL CARRIER PROTEIN TRANSACYLASE, MITOCHONDRIAL"/>
    <property type="match status" value="1"/>
</dbReference>
<dbReference type="Pfam" id="PF00698">
    <property type="entry name" value="Acyl_transf_1"/>
    <property type="match status" value="1"/>
</dbReference>
<dbReference type="PIRSF" id="PIRSF000446">
    <property type="entry name" value="Mct"/>
    <property type="match status" value="1"/>
</dbReference>
<dbReference type="SMART" id="SM00827">
    <property type="entry name" value="PKS_AT"/>
    <property type="match status" value="1"/>
</dbReference>
<dbReference type="SUPFAM" id="SSF52151">
    <property type="entry name" value="FabD/lysophospholipase-like"/>
    <property type="match status" value="1"/>
</dbReference>
<dbReference type="SUPFAM" id="SSF55048">
    <property type="entry name" value="Probable ACP-binding domain of malonyl-CoA ACP transacylase"/>
    <property type="match status" value="1"/>
</dbReference>
<reference key="1">
    <citation type="journal article" date="1992" name="FEBS Lett.">
        <title>Cloning and nucleotide sequence of the fabD gene encoding malonyl coenzyme A-acyl carrier protein transacylase of Escherichia coli.</title>
        <authorList>
            <person name="Magnuson K."/>
            <person name="Oh W."/>
            <person name="Larson T.J."/>
            <person name="Cronan J.E. Jr."/>
        </authorList>
    </citation>
    <scope>NUCLEOTIDE SEQUENCE [GENOMIC DNA]</scope>
    <scope>PROTEIN SEQUENCE OF 2-11</scope>
    <source>
        <strain>K12</strain>
    </source>
</reference>
<reference key="2">
    <citation type="journal article" date="1992" name="J. Bacteriol.">
        <title>Cloning, nucleotide sequence, and expression of the Escherichia coli fabD gene, encoding malonyl coenzyme A-acyl carrier protein transacylase.</title>
        <authorList>
            <person name="Verwoert I.I.G.S."/>
            <person name="Verbree E.C."/>
            <person name="van der Linden K.H."/>
            <person name="Nijkamp H.J."/>
            <person name="Stuitje A.R."/>
        </authorList>
    </citation>
    <scope>NUCLEOTIDE SEQUENCE [GENOMIC DNA]</scope>
    <scope>FUNCTION</scope>
    <scope>CATALYTIC ACTIVITY</scope>
</reference>
<reference key="3">
    <citation type="journal article" date="1995" name="Mol. Gen. Genet.">
        <title>Resistance to trifluoroperazine, a calmodulin inhibitor, maps to the fabD locus in Escherichia coli.</title>
        <authorList>
            <person name="Bouquin N."/>
            <person name="Tempete M."/>
            <person name="Holland I.B."/>
            <person name="Seror S.J."/>
        </authorList>
    </citation>
    <scope>NUCLEOTIDE SEQUENCE [GENOMIC DNA]</scope>
</reference>
<reference key="4">
    <citation type="journal article" date="1996" name="DNA Res.">
        <title>A 718-kb DNA sequence of the Escherichia coli K-12 genome corresponding to the 12.7-28.0 min region on the linkage map.</title>
        <authorList>
            <person name="Oshima T."/>
            <person name="Aiba H."/>
            <person name="Baba T."/>
            <person name="Fujita K."/>
            <person name="Hayashi K."/>
            <person name="Honjo A."/>
            <person name="Ikemoto K."/>
            <person name="Inada T."/>
            <person name="Itoh T."/>
            <person name="Kajihara M."/>
            <person name="Kanai K."/>
            <person name="Kashimoto K."/>
            <person name="Kimura S."/>
            <person name="Kitagawa M."/>
            <person name="Makino K."/>
            <person name="Masuda S."/>
            <person name="Miki T."/>
            <person name="Mizobuchi K."/>
            <person name="Mori H."/>
            <person name="Motomura K."/>
            <person name="Nakamura Y."/>
            <person name="Nashimoto H."/>
            <person name="Nishio Y."/>
            <person name="Saito N."/>
            <person name="Sampei G."/>
            <person name="Seki Y."/>
            <person name="Tagami H."/>
            <person name="Takemoto K."/>
            <person name="Wada C."/>
            <person name="Yamamoto Y."/>
            <person name="Yano M."/>
            <person name="Horiuchi T."/>
        </authorList>
    </citation>
    <scope>NUCLEOTIDE SEQUENCE [LARGE SCALE GENOMIC DNA]</scope>
    <source>
        <strain>K12 / W3110 / ATCC 27325 / DSM 5911</strain>
    </source>
</reference>
<reference key="5">
    <citation type="journal article" date="1997" name="Science">
        <title>The complete genome sequence of Escherichia coli K-12.</title>
        <authorList>
            <person name="Blattner F.R."/>
            <person name="Plunkett G. III"/>
            <person name="Bloch C.A."/>
            <person name="Perna N.T."/>
            <person name="Burland V."/>
            <person name="Riley M."/>
            <person name="Collado-Vides J."/>
            <person name="Glasner J.D."/>
            <person name="Rode C.K."/>
            <person name="Mayhew G.F."/>
            <person name="Gregor J."/>
            <person name="Davis N.W."/>
            <person name="Kirkpatrick H.A."/>
            <person name="Goeden M.A."/>
            <person name="Rose D.J."/>
            <person name="Mau B."/>
            <person name="Shao Y."/>
        </authorList>
    </citation>
    <scope>NUCLEOTIDE SEQUENCE [LARGE SCALE GENOMIC DNA]</scope>
    <source>
        <strain>K12 / MG1655 / ATCC 47076</strain>
    </source>
</reference>
<reference key="6">
    <citation type="journal article" date="2006" name="Mol. Syst. Biol.">
        <title>Highly accurate genome sequences of Escherichia coli K-12 strains MG1655 and W3110.</title>
        <authorList>
            <person name="Hayashi K."/>
            <person name="Morooka N."/>
            <person name="Yamamoto Y."/>
            <person name="Fujita K."/>
            <person name="Isono K."/>
            <person name="Choi S."/>
            <person name="Ohtsubo E."/>
            <person name="Baba T."/>
            <person name="Wanner B.L."/>
            <person name="Mori H."/>
            <person name="Horiuchi T."/>
        </authorList>
    </citation>
    <scope>NUCLEOTIDE SEQUENCE [LARGE SCALE GENOMIC DNA]</scope>
    <source>
        <strain>K12 / W3110 / ATCC 27325 / DSM 5911</strain>
    </source>
</reference>
<reference key="7">
    <citation type="journal article" date="1992" name="J. Biol. Chem.">
        <title>The gene encoding Escherichia coli acyl carrier protein lies within a cluster of fatty acid biosynthetic genes.</title>
        <authorList>
            <person name="Rawlings M."/>
            <person name="Cronan J.E. Jr."/>
        </authorList>
    </citation>
    <scope>NUCLEOTIDE SEQUENCE [GENOMIC DNA] OF 289-309</scope>
    <source>
        <strain>K12</strain>
    </source>
</reference>
<reference key="8">
    <citation type="submission" date="1994-09" db="UniProtKB">
        <authorList>
            <person name="Pasquali C."/>
            <person name="Sanchez J.-C."/>
            <person name="Ravier F."/>
            <person name="Golaz O."/>
            <person name="Hughes G.J."/>
            <person name="Frutiger S."/>
            <person name="Paquet N."/>
            <person name="Wilkins M."/>
            <person name="Appel R.D."/>
            <person name="Bairoch A."/>
            <person name="Hochstrasser D.F."/>
        </authorList>
    </citation>
    <scope>PROTEIN SEQUENCE OF 2-12</scope>
    <source>
        <strain>K12 / W3110 / ATCC 27325 / DSM 5911</strain>
    </source>
</reference>
<reference key="9">
    <citation type="journal article" date="1997" name="Electrophoresis">
        <title>Comparing the predicted and observed properties of proteins encoded in the genome of Escherichia coli K-12.</title>
        <authorList>
            <person name="Link A.J."/>
            <person name="Robison K."/>
            <person name="Church G.M."/>
        </authorList>
    </citation>
    <scope>PROTEIN SEQUENCE OF 2-11</scope>
    <source>
        <strain>K12 / EMG2</strain>
    </source>
</reference>
<reference key="10">
    <citation type="journal article" date="1995" name="J. Biol. Chem.">
        <title>The Escherichia coli malonyl-CoA:acyl carrier protein transacylase at 1.5-A resolution. Crystal structure of a fatty acid synthase component.</title>
        <authorList>
            <person name="Serre L."/>
            <person name="Verbree E.C."/>
            <person name="Dauter Z."/>
            <person name="Stuitje A.R."/>
            <person name="Derewenda Z.S."/>
        </authorList>
    </citation>
    <scope>X-RAY CRYSTALLOGRAPHY (1.5 ANGSTROMS)</scope>
    <scope>ACTIVE SITES</scope>
</reference>
<organism>
    <name type="scientific">Escherichia coli (strain K12)</name>
    <dbReference type="NCBI Taxonomy" id="83333"/>
    <lineage>
        <taxon>Bacteria</taxon>
        <taxon>Pseudomonadati</taxon>
        <taxon>Pseudomonadota</taxon>
        <taxon>Gammaproteobacteria</taxon>
        <taxon>Enterobacterales</taxon>
        <taxon>Enterobacteriaceae</taxon>
        <taxon>Escherichia</taxon>
    </lineage>
</organism>
<evidence type="ECO:0000269" key="1">
    <source>
    </source>
</evidence>
<evidence type="ECO:0000269" key="2">
    <source>
    </source>
</evidence>
<evidence type="ECO:0000269" key="3">
    <source>
    </source>
</evidence>
<evidence type="ECO:0000269" key="4">
    <source>
    </source>
</evidence>
<evidence type="ECO:0000269" key="5">
    <source ref="8"/>
</evidence>
<evidence type="ECO:0000305" key="6"/>
<evidence type="ECO:0007829" key="7">
    <source>
        <dbReference type="PDB" id="1MLA"/>
    </source>
</evidence>
<accession>P0AAI9</accession>
<accession>P25715</accession>
<comment type="catalytic activity">
    <reaction evidence="1">
        <text>holo-[ACP] + malonyl-CoA = malonyl-[ACP] + CoA</text>
        <dbReference type="Rhea" id="RHEA:41792"/>
        <dbReference type="Rhea" id="RHEA-COMP:9623"/>
        <dbReference type="Rhea" id="RHEA-COMP:9685"/>
        <dbReference type="ChEBI" id="CHEBI:57287"/>
        <dbReference type="ChEBI" id="CHEBI:57384"/>
        <dbReference type="ChEBI" id="CHEBI:64479"/>
        <dbReference type="ChEBI" id="CHEBI:78449"/>
        <dbReference type="EC" id="2.3.1.39"/>
    </reaction>
</comment>
<comment type="pathway">
    <text evidence="1">Lipid metabolism; fatty acid biosynthesis.</text>
</comment>
<comment type="similarity">
    <text evidence="6">Belongs to the FabD family.</text>
</comment>
<proteinExistence type="evidence at protein level"/>